<keyword id="KW-0040">ANK repeat</keyword>
<keyword id="KW-0963">Cytoplasm</keyword>
<keyword id="KW-0539">Nucleus</keyword>
<keyword id="KW-0597">Phosphoprotein</keyword>
<keyword id="KW-1267">Proteomics identification</keyword>
<keyword id="KW-1185">Reference proteome</keyword>
<keyword id="KW-0677">Repeat</keyword>
<comment type="subcellular location">
    <subcellularLocation>
        <location>Cytoplasm</location>
    </subcellularLocation>
    <subcellularLocation>
        <location evidence="1">Nucleus</location>
    </subcellularLocation>
</comment>
<comment type="PTM">
    <text evidence="1">Phosphorylated.</text>
</comment>
<comment type="similarity">
    <text evidence="5">Belongs to the ANKRD34 family.</text>
</comment>
<organism>
    <name type="scientific">Homo sapiens</name>
    <name type="common">Human</name>
    <dbReference type="NCBI Taxonomy" id="9606"/>
    <lineage>
        <taxon>Eukaryota</taxon>
        <taxon>Metazoa</taxon>
        <taxon>Chordata</taxon>
        <taxon>Craniata</taxon>
        <taxon>Vertebrata</taxon>
        <taxon>Euteleostomi</taxon>
        <taxon>Mammalia</taxon>
        <taxon>Eutheria</taxon>
        <taxon>Euarchontoglires</taxon>
        <taxon>Primates</taxon>
        <taxon>Haplorrhini</taxon>
        <taxon>Catarrhini</taxon>
        <taxon>Hominidae</taxon>
        <taxon>Homo</taxon>
    </lineage>
</organism>
<sequence>MDEGMEISSEGNSLIKAVHQSRLRLTRLLLEGGAYINESNDRGETPLMIACKTKHVDHQSVSKAKMVKYLLENNADPNIQDKSGKTALMHACLEKAGPEVVSLLLKSGADLSLQDHSSYSALVYAINSEDTETLKVLLSACKAKGKEVIIITTAKLPCGKHTTKQYLNMPPVDIDGCHSPATCTTPSEIDIKTASSPLSHSSETELTLFGFKDLELAGSNDDTWDPGSPVRKPALAPKGPKLPHAPPWVKSPPLLMHQNRVASLQEELQDITPEEELSYKTNGLALSKRFITRHQSIDVKDTAHLLRAFDQASSRKMSYDEINCQSYLSEGNQQCIEVPVDQDPDSNQTIFASTLRSIVQKRNLGANHYSSDSQLSAGLTPPTSEDGKALIGKKKILSPSPSQLSESKELLENIPPGPLSRRNHAVLERRGSGAFPLDHSVTQTRQGFLPPLNVNSHPPISDINVNNKICSLLSCGQKVLMPTVPIFPKEFKSKKMLLRRQSLQTEQIKQLVNF</sequence>
<name>AN34B_HUMAN</name>
<dbReference type="EMBL" id="CR749535">
    <property type="protein sequence ID" value="CAH18341.1"/>
    <property type="molecule type" value="mRNA"/>
</dbReference>
<dbReference type="EMBL" id="AC008434">
    <property type="status" value="NOT_ANNOTATED_CDS"/>
    <property type="molecule type" value="Genomic_DNA"/>
</dbReference>
<dbReference type="EMBL" id="BC137441">
    <property type="protein sequence ID" value="AAI37442.1"/>
    <property type="molecule type" value="mRNA"/>
</dbReference>
<dbReference type="EMBL" id="BC137442">
    <property type="protein sequence ID" value="AAI37443.1"/>
    <property type="molecule type" value="mRNA"/>
</dbReference>
<dbReference type="EMBL" id="BC142957">
    <property type="protein sequence ID" value="AAI42958.1"/>
    <property type="molecule type" value="mRNA"/>
</dbReference>
<dbReference type="CCDS" id="CCDS34194.1"/>
<dbReference type="RefSeq" id="NP_001004441.2">
    <property type="nucleotide sequence ID" value="NM_001004441.3"/>
</dbReference>
<dbReference type="RefSeq" id="XP_006714662.1">
    <property type="nucleotide sequence ID" value="XM_006714599.4"/>
</dbReference>
<dbReference type="RefSeq" id="XP_011541668.1">
    <property type="nucleotide sequence ID" value="XM_011543366.3"/>
</dbReference>
<dbReference type="RefSeq" id="XP_011541671.1">
    <property type="nucleotide sequence ID" value="XM_011543369.2"/>
</dbReference>
<dbReference type="RefSeq" id="XP_047273097.1">
    <property type="nucleotide sequence ID" value="XM_047417141.1"/>
</dbReference>
<dbReference type="RefSeq" id="XP_047273098.1">
    <property type="nucleotide sequence ID" value="XM_047417142.1"/>
</dbReference>
<dbReference type="RefSeq" id="XP_047273099.1">
    <property type="nucleotide sequence ID" value="XM_047417143.1"/>
</dbReference>
<dbReference type="SMR" id="A5PLL1"/>
<dbReference type="BioGRID" id="131001">
    <property type="interactions" value="3"/>
</dbReference>
<dbReference type="FunCoup" id="A5PLL1">
    <property type="interactions" value="6"/>
</dbReference>
<dbReference type="IntAct" id="A5PLL1">
    <property type="interactions" value="2"/>
</dbReference>
<dbReference type="MINT" id="A5PLL1"/>
<dbReference type="STRING" id="9606.ENSP00000339802"/>
<dbReference type="iPTMnet" id="A5PLL1"/>
<dbReference type="PhosphoSitePlus" id="A5PLL1"/>
<dbReference type="BioMuta" id="ANKRD34B"/>
<dbReference type="jPOST" id="A5PLL1"/>
<dbReference type="MassIVE" id="A5PLL1"/>
<dbReference type="PaxDb" id="9606-ENSP00000339802"/>
<dbReference type="PeptideAtlas" id="A5PLL1"/>
<dbReference type="Antibodypedia" id="49135">
    <property type="antibodies" value="81 antibodies from 16 providers"/>
</dbReference>
<dbReference type="DNASU" id="340120"/>
<dbReference type="Ensembl" id="ENST00000338682.8">
    <property type="protein sequence ID" value="ENSP00000339802.3"/>
    <property type="gene ID" value="ENSG00000189127.8"/>
</dbReference>
<dbReference type="GeneID" id="340120"/>
<dbReference type="KEGG" id="hsa:340120"/>
<dbReference type="MANE-Select" id="ENST00000338682.8">
    <property type="protein sequence ID" value="ENSP00000339802.3"/>
    <property type="RefSeq nucleotide sequence ID" value="NM_001004441.3"/>
    <property type="RefSeq protein sequence ID" value="NP_001004441.2"/>
</dbReference>
<dbReference type="UCSC" id="uc003kgw.4">
    <property type="organism name" value="human"/>
</dbReference>
<dbReference type="AGR" id="HGNC:33736"/>
<dbReference type="CTD" id="340120"/>
<dbReference type="DisGeNET" id="340120"/>
<dbReference type="GeneCards" id="ANKRD34B"/>
<dbReference type="HGNC" id="HGNC:33736">
    <property type="gene designation" value="ANKRD34B"/>
</dbReference>
<dbReference type="HPA" id="ENSG00000189127">
    <property type="expression patterns" value="Tissue enriched (brain)"/>
</dbReference>
<dbReference type="MIM" id="618581">
    <property type="type" value="gene"/>
</dbReference>
<dbReference type="neXtProt" id="NX_A5PLL1"/>
<dbReference type="OpenTargets" id="ENSG00000189127"/>
<dbReference type="PharmGKB" id="PA162376576"/>
<dbReference type="VEuPathDB" id="HostDB:ENSG00000189127"/>
<dbReference type="eggNOG" id="ENOG502QRZ2">
    <property type="taxonomic scope" value="Eukaryota"/>
</dbReference>
<dbReference type="GeneTree" id="ENSGT00390000012355"/>
<dbReference type="HOGENOM" id="CLU_042805_0_0_1"/>
<dbReference type="InParanoid" id="A5PLL1"/>
<dbReference type="OMA" id="AFPLDHN"/>
<dbReference type="OrthoDB" id="539213at2759"/>
<dbReference type="PAN-GO" id="A5PLL1">
    <property type="GO annotations" value="0 GO annotations based on evolutionary models"/>
</dbReference>
<dbReference type="PhylomeDB" id="A5PLL1"/>
<dbReference type="TreeFam" id="TF331155"/>
<dbReference type="PathwayCommons" id="A5PLL1"/>
<dbReference type="BioGRID-ORCS" id="340120">
    <property type="hits" value="21 hits in 1145 CRISPR screens"/>
</dbReference>
<dbReference type="GenomeRNAi" id="340120"/>
<dbReference type="Pharos" id="A5PLL1">
    <property type="development level" value="Tbio"/>
</dbReference>
<dbReference type="PRO" id="PR:A5PLL1"/>
<dbReference type="Proteomes" id="UP000005640">
    <property type="component" value="Chromosome 5"/>
</dbReference>
<dbReference type="RNAct" id="A5PLL1">
    <property type="molecule type" value="protein"/>
</dbReference>
<dbReference type="Bgee" id="ENSG00000189127">
    <property type="expression patterns" value="Expressed in nucleus accumbens and 47 other cell types or tissues"/>
</dbReference>
<dbReference type="ExpressionAtlas" id="A5PLL1">
    <property type="expression patterns" value="baseline and differential"/>
</dbReference>
<dbReference type="GO" id="GO:0005634">
    <property type="term" value="C:nucleus"/>
    <property type="evidence" value="ECO:0007669"/>
    <property type="project" value="UniProtKB-SubCell"/>
</dbReference>
<dbReference type="GO" id="GO:0071546">
    <property type="term" value="C:pi-body"/>
    <property type="evidence" value="ECO:0000318"/>
    <property type="project" value="GO_Central"/>
</dbReference>
<dbReference type="Gene3D" id="1.25.40.20">
    <property type="entry name" value="Ankyrin repeat-containing domain"/>
    <property type="match status" value="1"/>
</dbReference>
<dbReference type="InterPro" id="IPR042637">
    <property type="entry name" value="AN34A/B/C"/>
</dbReference>
<dbReference type="InterPro" id="IPR002110">
    <property type="entry name" value="Ankyrin_rpt"/>
</dbReference>
<dbReference type="InterPro" id="IPR036770">
    <property type="entry name" value="Ankyrin_rpt-contain_sf"/>
</dbReference>
<dbReference type="PANTHER" id="PTHR24156">
    <property type="entry name" value="ANK_REP_REGION DOMAIN-CONTAINING PROTEIN"/>
    <property type="match status" value="1"/>
</dbReference>
<dbReference type="PANTHER" id="PTHR24156:SF1">
    <property type="entry name" value="ANKYRIN REPEAT DOMAIN-CONTAINING PROTEIN 34B"/>
    <property type="match status" value="1"/>
</dbReference>
<dbReference type="Pfam" id="PF12796">
    <property type="entry name" value="Ank_2"/>
    <property type="match status" value="1"/>
</dbReference>
<dbReference type="Pfam" id="PF13637">
    <property type="entry name" value="Ank_4"/>
    <property type="match status" value="1"/>
</dbReference>
<dbReference type="SMART" id="SM00248">
    <property type="entry name" value="ANK"/>
    <property type="match status" value="4"/>
</dbReference>
<dbReference type="SUPFAM" id="SSF48403">
    <property type="entry name" value="Ankyrin repeat"/>
    <property type="match status" value="1"/>
</dbReference>
<dbReference type="PROSITE" id="PS50297">
    <property type="entry name" value="ANK_REP_REGION"/>
    <property type="match status" value="1"/>
</dbReference>
<dbReference type="PROSITE" id="PS50088">
    <property type="entry name" value="ANK_REPEAT"/>
    <property type="match status" value="2"/>
</dbReference>
<reference key="1">
    <citation type="journal article" date="2007" name="BMC Genomics">
        <title>The full-ORF clone resource of the German cDNA consortium.</title>
        <authorList>
            <person name="Bechtel S."/>
            <person name="Rosenfelder H."/>
            <person name="Duda A."/>
            <person name="Schmidt C.P."/>
            <person name="Ernst U."/>
            <person name="Wellenreuther R."/>
            <person name="Mehrle A."/>
            <person name="Schuster C."/>
            <person name="Bahr A."/>
            <person name="Bloecker H."/>
            <person name="Heubner D."/>
            <person name="Hoerlein A."/>
            <person name="Michel G."/>
            <person name="Wedler H."/>
            <person name="Koehrer K."/>
            <person name="Ottenwaelder B."/>
            <person name="Poustka A."/>
            <person name="Wiemann S."/>
            <person name="Schupp I."/>
        </authorList>
    </citation>
    <scope>NUCLEOTIDE SEQUENCE [LARGE SCALE MRNA]</scope>
    <scope>VARIANT SER-156</scope>
    <source>
        <tissue>Rectum tumor</tissue>
    </source>
</reference>
<reference key="2">
    <citation type="journal article" date="2004" name="Nature">
        <title>The DNA sequence and comparative analysis of human chromosome 5.</title>
        <authorList>
            <person name="Schmutz J."/>
            <person name="Martin J."/>
            <person name="Terry A."/>
            <person name="Couronne O."/>
            <person name="Grimwood J."/>
            <person name="Lowry S."/>
            <person name="Gordon L.A."/>
            <person name="Scott D."/>
            <person name="Xie G."/>
            <person name="Huang W."/>
            <person name="Hellsten U."/>
            <person name="Tran-Gyamfi M."/>
            <person name="She X."/>
            <person name="Prabhakar S."/>
            <person name="Aerts A."/>
            <person name="Altherr M."/>
            <person name="Bajorek E."/>
            <person name="Black S."/>
            <person name="Branscomb E."/>
            <person name="Caoile C."/>
            <person name="Challacombe J.F."/>
            <person name="Chan Y.M."/>
            <person name="Denys M."/>
            <person name="Detter J.C."/>
            <person name="Escobar J."/>
            <person name="Flowers D."/>
            <person name="Fotopulos D."/>
            <person name="Glavina T."/>
            <person name="Gomez M."/>
            <person name="Gonzales E."/>
            <person name="Goodstein D."/>
            <person name="Grigoriev I."/>
            <person name="Groza M."/>
            <person name="Hammon N."/>
            <person name="Hawkins T."/>
            <person name="Haydu L."/>
            <person name="Israni S."/>
            <person name="Jett J."/>
            <person name="Kadner K."/>
            <person name="Kimball H."/>
            <person name="Kobayashi A."/>
            <person name="Lopez F."/>
            <person name="Lou Y."/>
            <person name="Martinez D."/>
            <person name="Medina C."/>
            <person name="Morgan J."/>
            <person name="Nandkeshwar R."/>
            <person name="Noonan J.P."/>
            <person name="Pitluck S."/>
            <person name="Pollard M."/>
            <person name="Predki P."/>
            <person name="Priest J."/>
            <person name="Ramirez L."/>
            <person name="Retterer J."/>
            <person name="Rodriguez A."/>
            <person name="Rogers S."/>
            <person name="Salamov A."/>
            <person name="Salazar A."/>
            <person name="Thayer N."/>
            <person name="Tice H."/>
            <person name="Tsai M."/>
            <person name="Ustaszewska A."/>
            <person name="Vo N."/>
            <person name="Wheeler J."/>
            <person name="Wu K."/>
            <person name="Yang J."/>
            <person name="Dickson M."/>
            <person name="Cheng J.-F."/>
            <person name="Eichler E.E."/>
            <person name="Olsen A."/>
            <person name="Pennacchio L.A."/>
            <person name="Rokhsar D.S."/>
            <person name="Richardson P."/>
            <person name="Lucas S.M."/>
            <person name="Myers R.M."/>
            <person name="Rubin E.M."/>
        </authorList>
    </citation>
    <scope>NUCLEOTIDE SEQUENCE [LARGE SCALE GENOMIC DNA]</scope>
</reference>
<reference key="3">
    <citation type="journal article" date="2004" name="Genome Res.">
        <title>The status, quality, and expansion of the NIH full-length cDNA project: the Mammalian Gene Collection (MGC).</title>
        <authorList>
            <consortium name="The MGC Project Team"/>
        </authorList>
    </citation>
    <scope>NUCLEOTIDE SEQUENCE [LARGE SCALE MRNA]</scope>
    <source>
        <tissue>Brain</tissue>
    </source>
</reference>
<accession>A5PLL1</accession>
<accession>B2RPH1</accession>
<accession>Q68D79</accession>
<proteinExistence type="evidence at protein level"/>
<feature type="chain" id="PRO_0000319102" description="Ankyrin repeat domain-containing protein 34B">
    <location>
        <begin position="1"/>
        <end position="514"/>
    </location>
</feature>
<feature type="repeat" description="ANK 1">
    <location>
        <begin position="9"/>
        <end position="38"/>
    </location>
</feature>
<feature type="repeat" description="ANK 2">
    <location>
        <begin position="42"/>
        <end position="79"/>
    </location>
</feature>
<feature type="repeat" description="ANK 3">
    <location>
        <begin position="83"/>
        <end position="113"/>
    </location>
</feature>
<feature type="repeat" description="ANK 4">
    <location>
        <begin position="117"/>
        <end position="146"/>
    </location>
</feature>
<feature type="region of interest" description="Disordered" evidence="3">
    <location>
        <begin position="220"/>
        <end position="249"/>
    </location>
</feature>
<feature type="modified residue" description="Phosphoserine" evidence="2">
    <location>
        <position position="263"/>
    </location>
</feature>
<feature type="modified residue" description="Phosphothreonine" evidence="2">
    <location>
        <position position="272"/>
    </location>
</feature>
<feature type="modified residue" description="Phosphoserine" evidence="2">
    <location>
        <position position="296"/>
    </location>
</feature>
<feature type="sequence variant" id="VAR_038952" description="In dbSNP:rs32857." evidence="4">
    <original>L</original>
    <variation>S</variation>
    <location>
        <position position="156"/>
    </location>
</feature>
<feature type="sequence conflict" description="In Ref. 1; CAH18341." evidence="5" ref="1">
    <original>R</original>
    <variation>G</variation>
    <location>
        <position position="429"/>
    </location>
</feature>
<evidence type="ECO:0000250" key="1"/>
<evidence type="ECO:0000250" key="2">
    <source>
        <dbReference type="UniProtKB" id="Q3UUF8"/>
    </source>
</evidence>
<evidence type="ECO:0000256" key="3">
    <source>
        <dbReference type="SAM" id="MobiDB-lite"/>
    </source>
</evidence>
<evidence type="ECO:0000269" key="4">
    <source>
    </source>
</evidence>
<evidence type="ECO:0000305" key="5"/>
<gene>
    <name type="primary">ANKRD34B</name>
</gene>
<protein>
    <recommendedName>
        <fullName>Ankyrin repeat domain-containing protein 34B</fullName>
    </recommendedName>
</protein>